<evidence type="ECO:0000250" key="1">
    <source>
        <dbReference type="UniProtKB" id="P03928"/>
    </source>
</evidence>
<evidence type="ECO:0000250" key="2">
    <source>
        <dbReference type="UniProtKB" id="P19483"/>
    </source>
</evidence>
<evidence type="ECO:0000255" key="3"/>
<evidence type="ECO:0000256" key="4">
    <source>
        <dbReference type="SAM" id="MobiDB-lite"/>
    </source>
</evidence>
<evidence type="ECO:0000305" key="5"/>
<feature type="chain" id="PRO_0000195516" description="ATP synthase F(0) complex subunit 8">
    <location>
        <begin position="1"/>
        <end position="55"/>
    </location>
</feature>
<feature type="transmembrane region" description="Helical" evidence="3">
    <location>
        <begin position="4"/>
        <end position="24"/>
    </location>
</feature>
<feature type="region of interest" description="Disordered" evidence="4">
    <location>
        <begin position="32"/>
        <end position="55"/>
    </location>
</feature>
<feature type="compositionally biased region" description="Polar residues" evidence="4">
    <location>
        <begin position="32"/>
        <end position="41"/>
    </location>
</feature>
<protein>
    <recommendedName>
        <fullName evidence="1">ATP synthase F(0) complex subunit 8</fullName>
    </recommendedName>
    <alternativeName>
        <fullName>A6L</fullName>
    </alternativeName>
    <alternativeName>
        <fullName>F-ATPase subunit 8</fullName>
    </alternativeName>
</protein>
<organism>
    <name type="scientific">Formosania lacustris</name>
    <name type="common">Oriental stream loach</name>
    <name type="synonym">Crossostoma lacustre</name>
    <dbReference type="NCBI Taxonomy" id="7980"/>
    <lineage>
        <taxon>Eukaryota</taxon>
        <taxon>Metazoa</taxon>
        <taxon>Chordata</taxon>
        <taxon>Craniata</taxon>
        <taxon>Vertebrata</taxon>
        <taxon>Euteleostomi</taxon>
        <taxon>Actinopterygii</taxon>
        <taxon>Neopterygii</taxon>
        <taxon>Teleostei</taxon>
        <taxon>Ostariophysi</taxon>
        <taxon>Cypriniformes</taxon>
        <taxon>Gastromyzontidae</taxon>
        <taxon>Formosania</taxon>
    </lineage>
</organism>
<dbReference type="EMBL" id="M91245">
    <property type="protein sequence ID" value="AAB96815.1"/>
    <property type="molecule type" value="Genomic_DNA"/>
</dbReference>
<dbReference type="PIR" id="S35466">
    <property type="entry name" value="S35466"/>
</dbReference>
<dbReference type="RefSeq" id="NP_008307.1">
    <property type="nucleotide sequence ID" value="NC_001727.1"/>
</dbReference>
<dbReference type="SMR" id="P34190"/>
<dbReference type="GeneID" id="807992"/>
<dbReference type="CTD" id="4509"/>
<dbReference type="GO" id="GO:0031966">
    <property type="term" value="C:mitochondrial membrane"/>
    <property type="evidence" value="ECO:0007669"/>
    <property type="project" value="UniProtKB-SubCell"/>
</dbReference>
<dbReference type="GO" id="GO:0045259">
    <property type="term" value="C:proton-transporting ATP synthase complex"/>
    <property type="evidence" value="ECO:0007669"/>
    <property type="project" value="UniProtKB-KW"/>
</dbReference>
<dbReference type="GO" id="GO:0015078">
    <property type="term" value="F:proton transmembrane transporter activity"/>
    <property type="evidence" value="ECO:0007669"/>
    <property type="project" value="InterPro"/>
</dbReference>
<dbReference type="GO" id="GO:0015986">
    <property type="term" value="P:proton motive force-driven ATP synthesis"/>
    <property type="evidence" value="ECO:0007669"/>
    <property type="project" value="InterPro"/>
</dbReference>
<dbReference type="InterPro" id="IPR001421">
    <property type="entry name" value="ATP8_metazoa"/>
</dbReference>
<dbReference type="InterPro" id="IPR050635">
    <property type="entry name" value="ATPase_protein_8"/>
</dbReference>
<dbReference type="PANTHER" id="PTHR39937">
    <property type="entry name" value="ATP SYNTHASE PROTEIN 8"/>
    <property type="match status" value="1"/>
</dbReference>
<dbReference type="PANTHER" id="PTHR39937:SF1">
    <property type="entry name" value="ATP SYNTHASE PROTEIN 8"/>
    <property type="match status" value="1"/>
</dbReference>
<dbReference type="Pfam" id="PF00895">
    <property type="entry name" value="ATP-synt_8"/>
    <property type="match status" value="1"/>
</dbReference>
<comment type="function">
    <text evidence="1 2">Subunit 8, of the mitochondrial membrane ATP synthase complex (F(1)F(0) ATP synthase or Complex V) that produces ATP from ADP in the presence of a proton gradient across the membrane which is generated by electron transport complexes of the respiratory chain. ATP synthase complex consist of a soluble F(1) head domain - the catalytic core - and a membrane F(1) domain - the membrane proton channel. These two domains are linked by a central stalk rotating inside the F(1) region and a stationary peripheral stalk. During catalysis, ATP synthesis in the catalytic domain of F(1) is coupled via a rotary mechanism of the central stalk subunits to proton translocation (By similarity). In vivo, can only synthesize ATP although its ATP hydrolase activity can be activated artificially in vitro (By similarity). Part of the complex F(0) domain (By similarity).</text>
</comment>
<comment type="subunit">
    <text evidence="1">Component of the ATP synthase complex composed at least of ATP5F1A/subunit alpha, ATP5F1B/subunit beta, ATP5MC1/subunit c (homooctomer), MT-ATP6/subunit a, MT-ATP8/subunit 8, ATP5ME/subunit e, ATP5MF/subunit f, ATP5MG/subunit g, ATP5MK/subunit k, ATP5MJ/subunit j, ATP5F1C/subunit gamma, ATP5F1D/subunit delta, ATP5F1E/subunit epsilon, ATP5PF/subunit F6, ATP5PB/subunit b, ATP5PD/subunit d, ATP5PO/subunit OSCP. ATP synthase complex consists of a soluble F(1) head domain (subunits alpha(3) and beta(3)) - the catalytic core - and a membrane F(0) domain - the membrane proton channel (subunits c, a, 8, e, f, g, k and j). These two domains are linked by a central stalk (subunits gamma, delta, and epsilon) rotating inside the F1 region and a stationary peripheral stalk (subunits F6, b, d, and OSCP).</text>
</comment>
<comment type="subcellular location">
    <subcellularLocation>
        <location>Mitochondrion membrane</location>
        <topology>Single-pass membrane protein</topology>
    </subcellularLocation>
</comment>
<comment type="similarity">
    <text evidence="5">Belongs to the ATPase protein 8 family.</text>
</comment>
<proteinExistence type="inferred from homology"/>
<accession>P34190</accession>
<name>ATP8_FORLA</name>
<gene>
    <name evidence="1" type="primary">mt-atp8</name>
    <name type="synonym">atp8</name>
    <name type="synonym">atpase8</name>
    <name type="synonym">mtatp8</name>
</gene>
<keyword id="KW-0066">ATP synthesis</keyword>
<keyword id="KW-0138">CF(0)</keyword>
<keyword id="KW-0375">Hydrogen ion transport</keyword>
<keyword id="KW-0406">Ion transport</keyword>
<keyword id="KW-0472">Membrane</keyword>
<keyword id="KW-0496">Mitochondrion</keyword>
<keyword id="KW-0812">Transmembrane</keyword>
<keyword id="KW-1133">Transmembrane helix</keyword>
<keyword id="KW-0813">Transport</keyword>
<geneLocation type="mitochondrion"/>
<reference key="1">
    <citation type="journal article" date="1992" name="Nucleic Acids Res.">
        <title>The complete nucleotide sequence of the Crossostoma lacustre mitochondrial genome: conservation and variations among vertebrates.</title>
        <authorList>
            <person name="Tzeng C.-S."/>
            <person name="Hui C.-F."/>
            <person name="Shen S.-C."/>
            <person name="Huang P.C."/>
        </authorList>
    </citation>
    <scope>NUCLEOTIDE SEQUENCE [GENOMIC DNA]</scope>
</reference>
<sequence length="55" mass="6426">MPQLNPAPWFTILVFSWMIFLAIIPTKVMGHTSPNDSSPLSTEKHKTESWDWPWQ</sequence>